<reference key="1">
    <citation type="journal article" date="1995" name="Science">
        <title>The minimal gene complement of Mycoplasma genitalium.</title>
        <authorList>
            <person name="Fraser C.M."/>
            <person name="Gocayne J.D."/>
            <person name="White O."/>
            <person name="Adams M.D."/>
            <person name="Clayton R.A."/>
            <person name="Fleischmann R.D."/>
            <person name="Bult C.J."/>
            <person name="Kerlavage A.R."/>
            <person name="Sutton G.G."/>
            <person name="Kelley J.M."/>
            <person name="Fritchman J.L."/>
            <person name="Weidman J.F."/>
            <person name="Small K.V."/>
            <person name="Sandusky M."/>
            <person name="Fuhrmann J.L."/>
            <person name="Nguyen D.T."/>
            <person name="Utterback T.R."/>
            <person name="Saudek D.M."/>
            <person name="Phillips C.A."/>
            <person name="Merrick J.M."/>
            <person name="Tomb J.-F."/>
            <person name="Dougherty B.A."/>
            <person name="Bott K.F."/>
            <person name="Hu P.-C."/>
            <person name="Lucier T.S."/>
            <person name="Peterson S.N."/>
            <person name="Smith H.O."/>
            <person name="Hutchison C.A. III"/>
            <person name="Venter J.C."/>
        </authorList>
    </citation>
    <scope>NUCLEOTIDE SEQUENCE [LARGE SCALE GENOMIC DNA]</scope>
    <source>
        <strain>ATCC 33530 / DSM 19775 / NCTC 10195 / G37</strain>
    </source>
</reference>
<reference key="2">
    <citation type="journal article" date="1993" name="J. Bacteriol.">
        <title>A survey of the Mycoplasma genitalium genome by using random sequencing.</title>
        <authorList>
            <person name="Peterson S.N."/>
            <person name="Hu P.-C."/>
            <person name="Bott K.F."/>
            <person name="Hutchison C.A. III"/>
        </authorList>
    </citation>
    <scope>NUCLEOTIDE SEQUENCE [GENOMIC DNA] OF 64-140</scope>
    <source>
        <strain>ATCC 33530 / DSM 19775 / NCTC 10195 / G37</strain>
    </source>
</reference>
<organism>
    <name type="scientific">Mycoplasma genitalium (strain ATCC 33530 / DSM 19775 / NCTC 10195 / G37)</name>
    <name type="common">Mycoplasmoides genitalium</name>
    <dbReference type="NCBI Taxonomy" id="243273"/>
    <lineage>
        <taxon>Bacteria</taxon>
        <taxon>Bacillati</taxon>
        <taxon>Mycoplasmatota</taxon>
        <taxon>Mycoplasmoidales</taxon>
        <taxon>Mycoplasmoidaceae</taxon>
        <taxon>Mycoplasmoides</taxon>
    </lineage>
</organism>
<gene>
    <name type="ordered locus">MG144</name>
</gene>
<sequence length="279" mass="31717">MDPQNKSPKPQVKSTRLVVKKQPAGVVFPKLSIPVNDFEKTVTLTRAQKKEAKLLKKAQRKANKLNNKQDSTFFNSASGETNNTILPPGVKNQADNKTNRFSKFISFFTSSKNKQPDEITERLVDDPTVKNRFSAFNKKLIWVLKDKKLRARAWKIVGYTNLVIVAFFAGLLAVMNKFITLSSVEYPAIALQLPINNALWGISIFVISIVTLPFWTMFILFLMGVKDVRTSRSIHYFIWIVLIINVVLLLVSCLLMIAAYAHLDGYNIWRNLESLNPNN</sequence>
<proteinExistence type="predicted"/>
<name>Y144_MYCGE</name>
<keyword id="KW-1003">Cell membrane</keyword>
<keyword id="KW-0472">Membrane</keyword>
<keyword id="KW-1185">Reference proteome</keyword>
<keyword id="KW-0812">Transmembrane</keyword>
<keyword id="KW-1133">Transmembrane helix</keyword>
<accession>P47390</accession>
<comment type="subcellular location">
    <subcellularLocation>
        <location evidence="3">Cell membrane</location>
        <topology evidence="3">Multi-pass membrane protein</topology>
    </subcellularLocation>
</comment>
<protein>
    <recommendedName>
        <fullName>Uncharacterized protein MG144</fullName>
    </recommendedName>
</protein>
<dbReference type="EMBL" id="L43967">
    <property type="protein sequence ID" value="AAC71362.1"/>
    <property type="molecule type" value="Genomic_DNA"/>
</dbReference>
<dbReference type="EMBL" id="U02121">
    <property type="protein sequence ID" value="AAD12395.1"/>
    <property type="molecule type" value="Genomic_DNA"/>
</dbReference>
<dbReference type="PIR" id="I64215">
    <property type="entry name" value="I64215"/>
</dbReference>
<dbReference type="RefSeq" id="WP_009885830.1">
    <property type="nucleotide sequence ID" value="NC_000908.2"/>
</dbReference>
<dbReference type="SMR" id="P47390"/>
<dbReference type="STRING" id="243273.MG_144"/>
<dbReference type="GeneID" id="88282276"/>
<dbReference type="KEGG" id="mge:MG_144"/>
<dbReference type="eggNOG" id="COG3147">
    <property type="taxonomic scope" value="Bacteria"/>
</dbReference>
<dbReference type="HOGENOM" id="CLU_996842_0_0_14"/>
<dbReference type="InParanoid" id="P47390"/>
<dbReference type="OrthoDB" id="10009615at2"/>
<dbReference type="BioCyc" id="MGEN243273:G1GJ2-167-MONOMER"/>
<dbReference type="Proteomes" id="UP000000807">
    <property type="component" value="Chromosome"/>
</dbReference>
<dbReference type="GO" id="GO:0005886">
    <property type="term" value="C:plasma membrane"/>
    <property type="evidence" value="ECO:0007669"/>
    <property type="project" value="UniProtKB-SubCell"/>
</dbReference>
<dbReference type="NCBIfam" id="NF045739">
    <property type="entry name" value="MPN157"/>
    <property type="match status" value="1"/>
</dbReference>
<evidence type="ECO:0000255" key="1"/>
<evidence type="ECO:0000256" key="2">
    <source>
        <dbReference type="SAM" id="MobiDB-lite"/>
    </source>
</evidence>
<evidence type="ECO:0000305" key="3"/>
<feature type="chain" id="PRO_0000210440" description="Uncharacterized protein MG144">
    <location>
        <begin position="1"/>
        <end position="279"/>
    </location>
</feature>
<feature type="transmembrane region" description="Helical" evidence="1">
    <location>
        <begin position="156"/>
        <end position="176"/>
    </location>
</feature>
<feature type="transmembrane region" description="Helical" evidence="1">
    <location>
        <begin position="202"/>
        <end position="222"/>
    </location>
</feature>
<feature type="transmembrane region" description="Helical" evidence="1">
    <location>
        <begin position="237"/>
        <end position="257"/>
    </location>
</feature>
<feature type="region of interest" description="Disordered" evidence="2">
    <location>
        <begin position="60"/>
        <end position="92"/>
    </location>
</feature>
<feature type="compositionally biased region" description="Polar residues" evidence="2">
    <location>
        <begin position="70"/>
        <end position="85"/>
    </location>
</feature>